<proteinExistence type="inferred from homology"/>
<comment type="similarity">
    <text evidence="1">Belongs to the bacterial ribosomal protein bL34 family.</text>
</comment>
<organism>
    <name type="scientific">Chlorobaculum tepidum (strain ATCC 49652 / DSM 12025 / NBRC 103806 / TLS)</name>
    <name type="common">Chlorobium tepidum</name>
    <dbReference type="NCBI Taxonomy" id="194439"/>
    <lineage>
        <taxon>Bacteria</taxon>
        <taxon>Pseudomonadati</taxon>
        <taxon>Chlorobiota</taxon>
        <taxon>Chlorobiia</taxon>
        <taxon>Chlorobiales</taxon>
        <taxon>Chlorobiaceae</taxon>
        <taxon>Chlorobaculum</taxon>
    </lineage>
</organism>
<feature type="chain" id="PRO_0000187366" description="Large ribosomal subunit protein bL34">
    <location>
        <begin position="1"/>
        <end position="53"/>
    </location>
</feature>
<feature type="region of interest" description="Disordered" evidence="2">
    <location>
        <begin position="1"/>
        <end position="53"/>
    </location>
</feature>
<feature type="compositionally biased region" description="Basic residues" evidence="2">
    <location>
        <begin position="1"/>
        <end position="19"/>
    </location>
</feature>
<feature type="compositionally biased region" description="Basic residues" evidence="2">
    <location>
        <begin position="26"/>
        <end position="40"/>
    </location>
</feature>
<feature type="compositionally biased region" description="Low complexity" evidence="2">
    <location>
        <begin position="41"/>
        <end position="53"/>
    </location>
</feature>
<name>RL34_CHLTE</name>
<protein>
    <recommendedName>
        <fullName evidence="1">Large ribosomal subunit protein bL34</fullName>
    </recommendedName>
    <alternativeName>
        <fullName evidence="3">50S ribosomal protein L34</fullName>
    </alternativeName>
</protein>
<keyword id="KW-1185">Reference proteome</keyword>
<keyword id="KW-0687">Ribonucleoprotein</keyword>
<keyword id="KW-0689">Ribosomal protein</keyword>
<gene>
    <name evidence="1" type="primary">rpmH</name>
    <name type="ordered locus">CT0003</name>
</gene>
<accession>Q8KGG5</accession>
<reference key="1">
    <citation type="journal article" date="2002" name="Proc. Natl. Acad. Sci. U.S.A.">
        <title>The complete genome sequence of Chlorobium tepidum TLS, a photosynthetic, anaerobic, green-sulfur bacterium.</title>
        <authorList>
            <person name="Eisen J.A."/>
            <person name="Nelson K.E."/>
            <person name="Paulsen I.T."/>
            <person name="Heidelberg J.F."/>
            <person name="Wu M."/>
            <person name="Dodson R.J."/>
            <person name="DeBoy R.T."/>
            <person name="Gwinn M.L."/>
            <person name="Nelson W.C."/>
            <person name="Haft D.H."/>
            <person name="Hickey E.K."/>
            <person name="Peterson J.D."/>
            <person name="Durkin A.S."/>
            <person name="Kolonay J.F."/>
            <person name="Yang F."/>
            <person name="Holt I.E."/>
            <person name="Umayam L.A."/>
            <person name="Mason T.M."/>
            <person name="Brenner M."/>
            <person name="Shea T.P."/>
            <person name="Parksey D.S."/>
            <person name="Nierman W.C."/>
            <person name="Feldblyum T.V."/>
            <person name="Hansen C.L."/>
            <person name="Craven M.B."/>
            <person name="Radune D."/>
            <person name="Vamathevan J.J."/>
            <person name="Khouri H.M."/>
            <person name="White O."/>
            <person name="Gruber T.M."/>
            <person name="Ketchum K.A."/>
            <person name="Venter J.C."/>
            <person name="Tettelin H."/>
            <person name="Bryant D.A."/>
            <person name="Fraser C.M."/>
        </authorList>
    </citation>
    <scope>NUCLEOTIDE SEQUENCE [LARGE SCALE GENOMIC DNA]</scope>
    <source>
        <strain>ATCC 49652 / DSM 12025 / NBRC 103806 / TLS</strain>
    </source>
</reference>
<sequence length="53" mass="6157">MKRTFQPSNRKRRNKHGFRQRMATKNGRKVLSARRAKGRHSLSVSSSMSASKR</sequence>
<evidence type="ECO:0000255" key="1">
    <source>
        <dbReference type="HAMAP-Rule" id="MF_00391"/>
    </source>
</evidence>
<evidence type="ECO:0000256" key="2">
    <source>
        <dbReference type="SAM" id="MobiDB-lite"/>
    </source>
</evidence>
<evidence type="ECO:0000305" key="3"/>
<dbReference type="EMBL" id="AE006470">
    <property type="protein sequence ID" value="AAM71251.1"/>
    <property type="molecule type" value="Genomic_DNA"/>
</dbReference>
<dbReference type="RefSeq" id="NP_660909.1">
    <property type="nucleotide sequence ID" value="NC_002932.3"/>
</dbReference>
<dbReference type="RefSeq" id="WP_010931697.1">
    <property type="nucleotide sequence ID" value="NC_002932.3"/>
</dbReference>
<dbReference type="SMR" id="Q8KGG5"/>
<dbReference type="STRING" id="194439.CT0003"/>
<dbReference type="EnsemblBacteria" id="AAM71251">
    <property type="protein sequence ID" value="AAM71251"/>
    <property type="gene ID" value="CT0003"/>
</dbReference>
<dbReference type="KEGG" id="cte:CT0003"/>
<dbReference type="PATRIC" id="fig|194439.7.peg.3"/>
<dbReference type="eggNOG" id="COG0230">
    <property type="taxonomic scope" value="Bacteria"/>
</dbReference>
<dbReference type="HOGENOM" id="CLU_129938_2_0_10"/>
<dbReference type="OrthoDB" id="9804164at2"/>
<dbReference type="Proteomes" id="UP000001007">
    <property type="component" value="Chromosome"/>
</dbReference>
<dbReference type="GO" id="GO:1990904">
    <property type="term" value="C:ribonucleoprotein complex"/>
    <property type="evidence" value="ECO:0007669"/>
    <property type="project" value="UniProtKB-KW"/>
</dbReference>
<dbReference type="GO" id="GO:0005840">
    <property type="term" value="C:ribosome"/>
    <property type="evidence" value="ECO:0007669"/>
    <property type="project" value="UniProtKB-KW"/>
</dbReference>
<dbReference type="GO" id="GO:0003735">
    <property type="term" value="F:structural constituent of ribosome"/>
    <property type="evidence" value="ECO:0007669"/>
    <property type="project" value="InterPro"/>
</dbReference>
<dbReference type="GO" id="GO:0006412">
    <property type="term" value="P:translation"/>
    <property type="evidence" value="ECO:0007669"/>
    <property type="project" value="UniProtKB-UniRule"/>
</dbReference>
<dbReference type="FunFam" id="1.10.287.3980:FF:000001">
    <property type="entry name" value="Mitochondrial ribosomal protein L34"/>
    <property type="match status" value="1"/>
</dbReference>
<dbReference type="Gene3D" id="1.10.287.3980">
    <property type="match status" value="1"/>
</dbReference>
<dbReference type="HAMAP" id="MF_00391">
    <property type="entry name" value="Ribosomal_bL34"/>
    <property type="match status" value="1"/>
</dbReference>
<dbReference type="InterPro" id="IPR000271">
    <property type="entry name" value="Ribosomal_bL34"/>
</dbReference>
<dbReference type="InterPro" id="IPR020939">
    <property type="entry name" value="Ribosomal_bL34_CS"/>
</dbReference>
<dbReference type="NCBIfam" id="TIGR01030">
    <property type="entry name" value="rpmH_bact"/>
    <property type="match status" value="1"/>
</dbReference>
<dbReference type="PANTHER" id="PTHR14503:SF4">
    <property type="entry name" value="LARGE RIBOSOMAL SUBUNIT PROTEIN BL34M"/>
    <property type="match status" value="1"/>
</dbReference>
<dbReference type="PANTHER" id="PTHR14503">
    <property type="entry name" value="MITOCHONDRIAL RIBOSOMAL PROTEIN 34 FAMILY MEMBER"/>
    <property type="match status" value="1"/>
</dbReference>
<dbReference type="Pfam" id="PF00468">
    <property type="entry name" value="Ribosomal_L34"/>
    <property type="match status" value="1"/>
</dbReference>
<dbReference type="PROSITE" id="PS00784">
    <property type="entry name" value="RIBOSOMAL_L34"/>
    <property type="match status" value="1"/>
</dbReference>